<protein>
    <recommendedName>
        <fullName evidence="1">Large ribosomal subunit protein uL5</fullName>
    </recommendedName>
    <alternativeName>
        <fullName evidence="2">50S ribosomal protein L5</fullName>
    </alternativeName>
</protein>
<accession>A8F4S3</accession>
<name>RL5_PSELT</name>
<comment type="function">
    <text evidence="1">This is one of the proteins that bind and probably mediate the attachment of the 5S RNA into the large ribosomal subunit, where it forms part of the central protuberance. In the 70S ribosome it contacts protein S13 of the 30S subunit (bridge B1b), connecting the 2 subunits; this bridge is implicated in subunit movement. Contacts the P site tRNA; the 5S rRNA and some of its associated proteins might help stabilize positioning of ribosome-bound tRNAs.</text>
</comment>
<comment type="subunit">
    <text evidence="1">Part of the 50S ribosomal subunit; part of the 5S rRNA/L5/L18/L25 subcomplex. Contacts the 5S rRNA and the P site tRNA. Forms a bridge to the 30S subunit in the 70S ribosome.</text>
</comment>
<comment type="similarity">
    <text evidence="1">Belongs to the universal ribosomal protein uL5 family.</text>
</comment>
<feature type="chain" id="PRO_1000067624" description="Large ribosomal subunit protein uL5">
    <location>
        <begin position="1"/>
        <end position="183"/>
    </location>
</feature>
<gene>
    <name evidence="1" type="primary">rplE</name>
    <name type="ordered locus">Tlet_0591</name>
</gene>
<reference key="1">
    <citation type="submission" date="2007-08" db="EMBL/GenBank/DDBJ databases">
        <title>Complete sequence of Thermotoga lettingae TMO.</title>
        <authorList>
            <consortium name="US DOE Joint Genome Institute"/>
            <person name="Copeland A."/>
            <person name="Lucas S."/>
            <person name="Lapidus A."/>
            <person name="Barry K."/>
            <person name="Glavina del Rio T."/>
            <person name="Dalin E."/>
            <person name="Tice H."/>
            <person name="Pitluck S."/>
            <person name="Foster B."/>
            <person name="Bruce D."/>
            <person name="Schmutz J."/>
            <person name="Larimer F."/>
            <person name="Land M."/>
            <person name="Hauser L."/>
            <person name="Kyrpides N."/>
            <person name="Mikhailova N."/>
            <person name="Nelson K."/>
            <person name="Gogarten J.P."/>
            <person name="Noll K."/>
            <person name="Richardson P."/>
        </authorList>
    </citation>
    <scope>NUCLEOTIDE SEQUENCE [LARGE SCALE GENOMIC DNA]</scope>
    <source>
        <strain>ATCC BAA-301 / DSM 14385 / NBRC 107922 / TMO</strain>
    </source>
</reference>
<dbReference type="EMBL" id="CP000812">
    <property type="protein sequence ID" value="ABV33157.1"/>
    <property type="molecule type" value="Genomic_DNA"/>
</dbReference>
<dbReference type="RefSeq" id="WP_012002638.1">
    <property type="nucleotide sequence ID" value="NZ_BSDV01000001.1"/>
</dbReference>
<dbReference type="SMR" id="A8F4S3"/>
<dbReference type="STRING" id="416591.Tlet_0591"/>
<dbReference type="KEGG" id="tle:Tlet_0591"/>
<dbReference type="eggNOG" id="COG0094">
    <property type="taxonomic scope" value="Bacteria"/>
</dbReference>
<dbReference type="HOGENOM" id="CLU_061015_2_1_0"/>
<dbReference type="OrthoDB" id="9806626at2"/>
<dbReference type="Proteomes" id="UP000002016">
    <property type="component" value="Chromosome"/>
</dbReference>
<dbReference type="GO" id="GO:1990904">
    <property type="term" value="C:ribonucleoprotein complex"/>
    <property type="evidence" value="ECO:0007669"/>
    <property type="project" value="UniProtKB-KW"/>
</dbReference>
<dbReference type="GO" id="GO:0005840">
    <property type="term" value="C:ribosome"/>
    <property type="evidence" value="ECO:0007669"/>
    <property type="project" value="UniProtKB-KW"/>
</dbReference>
<dbReference type="GO" id="GO:0019843">
    <property type="term" value="F:rRNA binding"/>
    <property type="evidence" value="ECO:0007669"/>
    <property type="project" value="UniProtKB-UniRule"/>
</dbReference>
<dbReference type="GO" id="GO:0003735">
    <property type="term" value="F:structural constituent of ribosome"/>
    <property type="evidence" value="ECO:0007669"/>
    <property type="project" value="InterPro"/>
</dbReference>
<dbReference type="GO" id="GO:0000049">
    <property type="term" value="F:tRNA binding"/>
    <property type="evidence" value="ECO:0007669"/>
    <property type="project" value="UniProtKB-UniRule"/>
</dbReference>
<dbReference type="GO" id="GO:0006412">
    <property type="term" value="P:translation"/>
    <property type="evidence" value="ECO:0007669"/>
    <property type="project" value="UniProtKB-UniRule"/>
</dbReference>
<dbReference type="FunFam" id="3.30.1440.10:FF:000001">
    <property type="entry name" value="50S ribosomal protein L5"/>
    <property type="match status" value="1"/>
</dbReference>
<dbReference type="Gene3D" id="3.30.1440.10">
    <property type="match status" value="1"/>
</dbReference>
<dbReference type="HAMAP" id="MF_01333_B">
    <property type="entry name" value="Ribosomal_uL5_B"/>
    <property type="match status" value="1"/>
</dbReference>
<dbReference type="InterPro" id="IPR002132">
    <property type="entry name" value="Ribosomal_uL5"/>
</dbReference>
<dbReference type="InterPro" id="IPR020930">
    <property type="entry name" value="Ribosomal_uL5_bac-type"/>
</dbReference>
<dbReference type="InterPro" id="IPR031309">
    <property type="entry name" value="Ribosomal_uL5_C"/>
</dbReference>
<dbReference type="InterPro" id="IPR020929">
    <property type="entry name" value="Ribosomal_uL5_CS"/>
</dbReference>
<dbReference type="InterPro" id="IPR022803">
    <property type="entry name" value="Ribosomal_uL5_dom_sf"/>
</dbReference>
<dbReference type="InterPro" id="IPR031310">
    <property type="entry name" value="Ribosomal_uL5_N"/>
</dbReference>
<dbReference type="NCBIfam" id="NF000585">
    <property type="entry name" value="PRK00010.1"/>
    <property type="match status" value="1"/>
</dbReference>
<dbReference type="PANTHER" id="PTHR11994">
    <property type="entry name" value="60S RIBOSOMAL PROTEIN L11-RELATED"/>
    <property type="match status" value="1"/>
</dbReference>
<dbReference type="Pfam" id="PF00281">
    <property type="entry name" value="Ribosomal_L5"/>
    <property type="match status" value="1"/>
</dbReference>
<dbReference type="Pfam" id="PF00673">
    <property type="entry name" value="Ribosomal_L5_C"/>
    <property type="match status" value="1"/>
</dbReference>
<dbReference type="PIRSF" id="PIRSF002161">
    <property type="entry name" value="Ribosomal_L5"/>
    <property type="match status" value="1"/>
</dbReference>
<dbReference type="SUPFAM" id="SSF55282">
    <property type="entry name" value="RL5-like"/>
    <property type="match status" value="1"/>
</dbReference>
<dbReference type="PROSITE" id="PS00358">
    <property type="entry name" value="RIBOSOMAL_L5"/>
    <property type="match status" value="1"/>
</dbReference>
<evidence type="ECO:0000255" key="1">
    <source>
        <dbReference type="HAMAP-Rule" id="MF_01333"/>
    </source>
</evidence>
<evidence type="ECO:0000305" key="2"/>
<keyword id="KW-1185">Reference proteome</keyword>
<keyword id="KW-0687">Ribonucleoprotein</keyword>
<keyword id="KW-0689">Ribosomal protein</keyword>
<keyword id="KW-0694">RNA-binding</keyword>
<keyword id="KW-0699">rRNA-binding</keyword>
<keyword id="KW-0820">tRNA-binding</keyword>
<sequence>MVTQYIPLKEKYEKEVVPKLMKEFNYRNINQVPRIEKIVINMGIGEGSRNADLLNKHLKELAAITGQKPVITKAKKSISNFKIRKGMNVGLKVTLRGLRMWNFLYKIANIVLPKVRDFRGLNPNSFDGHGNYSFGLTEQFVFPEITPDQSPKTQGMDIVIVTTAKTDAEAFKLLEFLGFPFKR</sequence>
<organism>
    <name type="scientific">Pseudothermotoga lettingae (strain ATCC BAA-301 / DSM 14385 / NBRC 107922 / TMO)</name>
    <name type="common">Thermotoga lettingae</name>
    <dbReference type="NCBI Taxonomy" id="416591"/>
    <lineage>
        <taxon>Bacteria</taxon>
        <taxon>Thermotogati</taxon>
        <taxon>Thermotogota</taxon>
        <taxon>Thermotogae</taxon>
        <taxon>Thermotogales</taxon>
        <taxon>Thermotogaceae</taxon>
        <taxon>Pseudothermotoga</taxon>
    </lineage>
</organism>
<proteinExistence type="inferred from homology"/>